<accession>P39072</accession>
<accession>P94557</accession>
<dbReference type="EMBL" id="Z75208">
    <property type="protein sequence ID" value="CAA99553.1"/>
    <property type="molecule type" value="Genomic_DNA"/>
</dbReference>
<dbReference type="EMBL" id="AL009126">
    <property type="protein sequence ID" value="CAB14798.1"/>
    <property type="molecule type" value="Genomic_DNA"/>
</dbReference>
<dbReference type="EMBL" id="M65162">
    <property type="protein sequence ID" value="AAA65726.1"/>
    <property type="molecule type" value="Genomic_DNA"/>
</dbReference>
<dbReference type="PIR" id="C69631">
    <property type="entry name" value="C69631"/>
</dbReference>
<dbReference type="RefSeq" id="NP_390716.1">
    <property type="nucleotide sequence ID" value="NC_000964.3"/>
</dbReference>
<dbReference type="RefSeq" id="WP_003229578.1">
    <property type="nucleotide sequence ID" value="NZ_OZ025638.1"/>
</dbReference>
<dbReference type="PDB" id="6GZ8">
    <property type="method" value="X-ray"/>
    <property type="resolution" value="1.00 A"/>
    <property type="chains" value="A=76-213"/>
</dbReference>
<dbReference type="PDB" id="6GZB">
    <property type="method" value="X-ray"/>
    <property type="resolution" value="2.10 A"/>
    <property type="chains" value="A/B/C/D=26-366"/>
</dbReference>
<dbReference type="PDBsum" id="6GZ8"/>
<dbReference type="PDBsum" id="6GZB"/>
<dbReference type="SMR" id="P39072"/>
<dbReference type="FunCoup" id="P39072">
    <property type="interactions" value="107"/>
</dbReference>
<dbReference type="STRING" id="224308.BSU28380"/>
<dbReference type="PaxDb" id="224308-BSU28380"/>
<dbReference type="EnsemblBacteria" id="CAB14798">
    <property type="protein sequence ID" value="CAB14798"/>
    <property type="gene ID" value="BSU_28380"/>
</dbReference>
<dbReference type="GeneID" id="936490"/>
<dbReference type="KEGG" id="bsu:BSU28380"/>
<dbReference type="PATRIC" id="fig|224308.179.peg.3083"/>
<dbReference type="eggNOG" id="COG5401">
    <property type="taxonomic scope" value="Bacteria"/>
</dbReference>
<dbReference type="InParanoid" id="P39072"/>
<dbReference type="OrthoDB" id="1715058at2"/>
<dbReference type="BioCyc" id="BSUB:BSU28380-MONOMER"/>
<dbReference type="Proteomes" id="UP000001570">
    <property type="component" value="Chromosome"/>
</dbReference>
<dbReference type="GO" id="GO:0030435">
    <property type="term" value="P:sporulation resulting in formation of a cellular spore"/>
    <property type="evidence" value="ECO:0007669"/>
    <property type="project" value="UniProtKB-KW"/>
</dbReference>
<dbReference type="InterPro" id="IPR019606">
    <property type="entry name" value="GerMN"/>
</dbReference>
<dbReference type="Pfam" id="PF10646">
    <property type="entry name" value="Germane"/>
    <property type="match status" value="2"/>
</dbReference>
<dbReference type="SMART" id="SM00909">
    <property type="entry name" value="Germane"/>
    <property type="match status" value="2"/>
</dbReference>
<dbReference type="PROSITE" id="PS51257">
    <property type="entry name" value="PROKAR_LIPOPROTEIN"/>
    <property type="match status" value="1"/>
</dbReference>
<comment type="function">
    <text>Unknown. Affects both sporulation and germination.</text>
</comment>
<comment type="developmental stage">
    <text>Expressed shortly after the beginning of sporulation.</text>
</comment>
<reference key="1">
    <citation type="journal article" date="1996" name="Microbiology">
        <title>The dnaB-pheA (256 degrees-240 degrees) region of the Bacillus subtilis chromosome containing genes responsible for stress responses, the utilization of plant cell walls and primary metabolism.</title>
        <authorList>
            <person name="Wipat A."/>
            <person name="Carter N."/>
            <person name="Brignell C.S."/>
            <person name="Guy J.B."/>
            <person name="Piper K."/>
            <person name="Sanders J."/>
            <person name="Emmerson P.T."/>
            <person name="Harwood C.R."/>
        </authorList>
    </citation>
    <scope>NUCLEOTIDE SEQUENCE [GENOMIC DNA]</scope>
    <source>
        <strain>168</strain>
    </source>
</reference>
<reference key="2">
    <citation type="journal article" date="1997" name="Nature">
        <title>The complete genome sequence of the Gram-positive bacterium Bacillus subtilis.</title>
        <authorList>
            <person name="Kunst F."/>
            <person name="Ogasawara N."/>
            <person name="Moszer I."/>
            <person name="Albertini A.M."/>
            <person name="Alloni G."/>
            <person name="Azevedo V."/>
            <person name="Bertero M.G."/>
            <person name="Bessieres P."/>
            <person name="Bolotin A."/>
            <person name="Borchert S."/>
            <person name="Borriss R."/>
            <person name="Boursier L."/>
            <person name="Brans A."/>
            <person name="Braun M."/>
            <person name="Brignell S.C."/>
            <person name="Bron S."/>
            <person name="Brouillet S."/>
            <person name="Bruschi C.V."/>
            <person name="Caldwell B."/>
            <person name="Capuano V."/>
            <person name="Carter N.M."/>
            <person name="Choi S.-K."/>
            <person name="Codani J.-J."/>
            <person name="Connerton I.F."/>
            <person name="Cummings N.J."/>
            <person name="Daniel R.A."/>
            <person name="Denizot F."/>
            <person name="Devine K.M."/>
            <person name="Duesterhoeft A."/>
            <person name="Ehrlich S.D."/>
            <person name="Emmerson P.T."/>
            <person name="Entian K.-D."/>
            <person name="Errington J."/>
            <person name="Fabret C."/>
            <person name="Ferrari E."/>
            <person name="Foulger D."/>
            <person name="Fritz C."/>
            <person name="Fujita M."/>
            <person name="Fujita Y."/>
            <person name="Fuma S."/>
            <person name="Galizzi A."/>
            <person name="Galleron N."/>
            <person name="Ghim S.-Y."/>
            <person name="Glaser P."/>
            <person name="Goffeau A."/>
            <person name="Golightly E.J."/>
            <person name="Grandi G."/>
            <person name="Guiseppi G."/>
            <person name="Guy B.J."/>
            <person name="Haga K."/>
            <person name="Haiech J."/>
            <person name="Harwood C.R."/>
            <person name="Henaut A."/>
            <person name="Hilbert H."/>
            <person name="Holsappel S."/>
            <person name="Hosono S."/>
            <person name="Hullo M.-F."/>
            <person name="Itaya M."/>
            <person name="Jones L.-M."/>
            <person name="Joris B."/>
            <person name="Karamata D."/>
            <person name="Kasahara Y."/>
            <person name="Klaerr-Blanchard M."/>
            <person name="Klein C."/>
            <person name="Kobayashi Y."/>
            <person name="Koetter P."/>
            <person name="Koningstein G."/>
            <person name="Krogh S."/>
            <person name="Kumano M."/>
            <person name="Kurita K."/>
            <person name="Lapidus A."/>
            <person name="Lardinois S."/>
            <person name="Lauber J."/>
            <person name="Lazarevic V."/>
            <person name="Lee S.-M."/>
            <person name="Levine A."/>
            <person name="Liu H."/>
            <person name="Masuda S."/>
            <person name="Mauel C."/>
            <person name="Medigue C."/>
            <person name="Medina N."/>
            <person name="Mellado R.P."/>
            <person name="Mizuno M."/>
            <person name="Moestl D."/>
            <person name="Nakai S."/>
            <person name="Noback M."/>
            <person name="Noone D."/>
            <person name="O'Reilly M."/>
            <person name="Ogawa K."/>
            <person name="Ogiwara A."/>
            <person name="Oudega B."/>
            <person name="Park S.-H."/>
            <person name="Parro V."/>
            <person name="Pohl T.M."/>
            <person name="Portetelle D."/>
            <person name="Porwollik S."/>
            <person name="Prescott A.M."/>
            <person name="Presecan E."/>
            <person name="Pujic P."/>
            <person name="Purnelle B."/>
            <person name="Rapoport G."/>
            <person name="Rey M."/>
            <person name="Reynolds S."/>
            <person name="Rieger M."/>
            <person name="Rivolta C."/>
            <person name="Rocha E."/>
            <person name="Roche B."/>
            <person name="Rose M."/>
            <person name="Sadaie Y."/>
            <person name="Sato T."/>
            <person name="Scanlan E."/>
            <person name="Schleich S."/>
            <person name="Schroeter R."/>
            <person name="Scoffone F."/>
            <person name="Sekiguchi J."/>
            <person name="Sekowska A."/>
            <person name="Seror S.J."/>
            <person name="Serror P."/>
            <person name="Shin B.-S."/>
            <person name="Soldo B."/>
            <person name="Sorokin A."/>
            <person name="Tacconi E."/>
            <person name="Takagi T."/>
            <person name="Takahashi H."/>
            <person name="Takemaru K."/>
            <person name="Takeuchi M."/>
            <person name="Tamakoshi A."/>
            <person name="Tanaka T."/>
            <person name="Terpstra P."/>
            <person name="Tognoni A."/>
            <person name="Tosato V."/>
            <person name="Uchiyama S."/>
            <person name="Vandenbol M."/>
            <person name="Vannier F."/>
            <person name="Vassarotti A."/>
            <person name="Viari A."/>
            <person name="Wambutt R."/>
            <person name="Wedler E."/>
            <person name="Wedler H."/>
            <person name="Weitzenegger T."/>
            <person name="Winters P."/>
            <person name="Wipat A."/>
            <person name="Yamamoto H."/>
            <person name="Yamane K."/>
            <person name="Yasumoto K."/>
            <person name="Yata K."/>
            <person name="Yoshida K."/>
            <person name="Yoshikawa H.-F."/>
            <person name="Zumstein E."/>
            <person name="Yoshikawa H."/>
            <person name="Danchin A."/>
        </authorList>
    </citation>
    <scope>NUCLEOTIDE SEQUENCE [LARGE SCALE GENOMIC DNA]</scope>
    <source>
        <strain>168</strain>
    </source>
</reference>
<reference key="3">
    <citation type="journal article" date="1994" name="FEMS Microbiol. Lett.">
        <title>Molecular genetical and phenotypical analysis of the gerM spore germination gene of Bacillus subtilis 168.</title>
        <authorList>
            <person name="Slynn G.M."/>
            <person name="Sammons R.L."/>
            <person name="Smith D.A."/>
            <person name="Moir A."/>
            <person name="Corfe B.M."/>
        </authorList>
    </citation>
    <scope>NUCLEOTIDE SEQUENCE [GENOMIC DNA] OF 1-210</scope>
    <source>
        <strain>168</strain>
    </source>
</reference>
<reference key="4">
    <citation type="journal article" date="1987" name="J. Gen. Microbiol.">
        <title>Genetical and molecular studies on gerM, a new developmental locus of Bacillus subtilis.</title>
        <authorList>
            <person name="Sammons R.L."/>
            <person name="Slynn G.M."/>
            <person name="Smith D.A."/>
        </authorList>
    </citation>
    <scope>CHARACTERIZATION</scope>
</reference>
<gene>
    <name type="primary">gerM</name>
    <name type="ordered locus">BSU28380</name>
</gene>
<name>GERM_BACSU</name>
<proteinExistence type="evidence at protein level"/>
<organism>
    <name type="scientific">Bacillus subtilis (strain 168)</name>
    <dbReference type="NCBI Taxonomy" id="224308"/>
    <lineage>
        <taxon>Bacteria</taxon>
        <taxon>Bacillati</taxon>
        <taxon>Bacillota</taxon>
        <taxon>Bacilli</taxon>
        <taxon>Bacillales</taxon>
        <taxon>Bacillaceae</taxon>
        <taxon>Bacillus</taxon>
    </lineage>
</organism>
<keyword id="KW-0002">3D-structure</keyword>
<keyword id="KW-0309">Germination</keyword>
<keyword id="KW-1185">Reference proteome</keyword>
<keyword id="KW-0749">Sporulation</keyword>
<feature type="chain" id="PRO_0000087465" description="Spore germination protein GerM">
    <location>
        <begin position="1"/>
        <end position="366"/>
    </location>
</feature>
<feature type="region of interest" description="Disordered" evidence="1">
    <location>
        <begin position="42"/>
        <end position="72"/>
    </location>
</feature>
<feature type="region of interest" description="Disordered" evidence="1">
    <location>
        <begin position="346"/>
        <end position="366"/>
    </location>
</feature>
<feature type="compositionally biased region" description="Basic and acidic residues" evidence="1">
    <location>
        <begin position="58"/>
        <end position="69"/>
    </location>
</feature>
<feature type="compositionally biased region" description="Polar residues" evidence="1">
    <location>
        <begin position="357"/>
        <end position="366"/>
    </location>
</feature>
<feature type="sequence conflict" description="In Ref. 3; AAA65726." evidence="2" ref="3">
    <original>I</original>
    <variation>T</variation>
    <location>
        <position position="210"/>
    </location>
</feature>
<feature type="strand" evidence="3">
    <location>
        <begin position="77"/>
        <end position="84"/>
    </location>
</feature>
<feature type="strand" evidence="3">
    <location>
        <begin position="90"/>
        <end position="97"/>
    </location>
</feature>
<feature type="helix" evidence="3">
    <location>
        <begin position="103"/>
        <end position="109"/>
    </location>
</feature>
<feature type="helix" evidence="3">
    <location>
        <begin position="116"/>
        <end position="120"/>
    </location>
</feature>
<feature type="strand" evidence="3">
    <location>
        <begin position="135"/>
        <end position="139"/>
    </location>
</feature>
<feature type="strand" evidence="3">
    <location>
        <begin position="143"/>
        <end position="149"/>
    </location>
</feature>
<feature type="helix" evidence="3">
    <location>
        <begin position="151"/>
        <end position="154"/>
    </location>
</feature>
<feature type="helix" evidence="3">
    <location>
        <begin position="158"/>
        <end position="160"/>
    </location>
</feature>
<feature type="helix" evidence="3">
    <location>
        <begin position="161"/>
        <end position="173"/>
    </location>
</feature>
<feature type="strand" evidence="3">
    <location>
        <begin position="179"/>
        <end position="185"/>
    </location>
</feature>
<feature type="turn" evidence="3">
    <location>
        <begin position="194"/>
        <end position="196"/>
    </location>
</feature>
<feature type="strand" evidence="3">
    <location>
        <begin position="202"/>
        <end position="204"/>
    </location>
</feature>
<feature type="helix" evidence="4">
    <location>
        <begin position="206"/>
        <end position="208"/>
    </location>
</feature>
<feature type="strand" evidence="4">
    <location>
        <begin position="222"/>
        <end position="233"/>
    </location>
</feature>
<feature type="strand" evidence="4">
    <location>
        <begin position="238"/>
        <end position="248"/>
    </location>
</feature>
<feature type="helix" evidence="4">
    <location>
        <begin position="254"/>
        <end position="264"/>
    </location>
</feature>
<feature type="strand" evidence="4">
    <location>
        <begin position="282"/>
        <end position="284"/>
    </location>
</feature>
<feature type="strand" evidence="4">
    <location>
        <begin position="287"/>
        <end position="289"/>
    </location>
</feature>
<feature type="strand" evidence="4">
    <location>
        <begin position="292"/>
        <end position="297"/>
    </location>
</feature>
<feature type="helix" evidence="4">
    <location>
        <begin position="299"/>
        <end position="301"/>
    </location>
</feature>
<feature type="helix" evidence="4">
    <location>
        <begin position="314"/>
        <end position="324"/>
    </location>
</feature>
<feature type="strand" evidence="4">
    <location>
        <begin position="332"/>
        <end position="337"/>
    </location>
</feature>
<feature type="strand" evidence="4">
    <location>
        <begin position="359"/>
        <end position="363"/>
    </location>
</feature>
<evidence type="ECO:0000256" key="1">
    <source>
        <dbReference type="SAM" id="MobiDB-lite"/>
    </source>
</evidence>
<evidence type="ECO:0000305" key="2"/>
<evidence type="ECO:0007829" key="3">
    <source>
        <dbReference type="PDB" id="6GZ8"/>
    </source>
</evidence>
<evidence type="ECO:0007829" key="4">
    <source>
        <dbReference type="PDB" id="6GZB"/>
    </source>
</evidence>
<sequence>MLKKGPAVIGATCLTSALLLSGCGLFQSDKAAEEIDPPQDVTFVNDEAGANSNTTAAKKTESEKSDTAKADQASSTVMRELYLIDKNGYVVAQTLPLPKSESTAKQALEYLVQGGPVSEILPNGFRAVLPADTTVNVDIKKDGTAIADFSNEFKNYKKEDEQKIVQSVTWTLTQFSSIDKVKLRINGHELKEMPVGGTPISDDLSRKDGINLETAGVNDLTATHPLTVYYLAENEDSEYYVPVTKRIDNSEKDDITAAINELAKGPSKVSGLLTDFSEDVKLVSKPKIKDGRVTLDFNQSIFGSADEKTKMISSEVLNSIVLTLTEQPDVKSVSVKVNGKSELVNEKGEKLTEPVSRPSQVNTGSF</sequence>
<protein>
    <recommendedName>
        <fullName>Spore germination protein GerM</fullName>
    </recommendedName>
</protein>